<name>SBDS_XENTR</name>
<protein>
    <recommendedName>
        <fullName>Ribosome maturation protein SBDS</fullName>
    </recommendedName>
    <alternativeName>
        <fullName>Shwachman-Bodian-Diamond syndrome protein homolog</fullName>
    </alternativeName>
</protein>
<feature type="initiator methionine" description="Removed" evidence="1">
    <location>
        <position position="1"/>
    </location>
</feature>
<feature type="chain" id="PRO_0000304736" description="Ribosome maturation protein SBDS">
    <location>
        <begin position="2"/>
        <end position="250"/>
    </location>
</feature>
<feature type="modified residue" description="N-acetylserine" evidence="1">
    <location>
        <position position="2"/>
    </location>
</feature>
<keyword id="KW-0007">Acetylation</keyword>
<keyword id="KW-0963">Cytoplasm</keyword>
<keyword id="KW-0206">Cytoskeleton</keyword>
<keyword id="KW-0539">Nucleus</keyword>
<keyword id="KW-1185">Reference proteome</keyword>
<keyword id="KW-0690">Ribosome biogenesis</keyword>
<gene>
    <name type="primary">sbds</name>
    <name type="ORF">TGas062n22.1</name>
</gene>
<reference key="1">
    <citation type="submission" date="2006-10" db="EMBL/GenBank/DDBJ databases">
        <authorList>
            <consortium name="Sanger Xenopus tropicalis EST/cDNA project"/>
        </authorList>
    </citation>
    <scope>NUCLEOTIDE SEQUENCE [LARGE SCALE MRNA]</scope>
    <source>
        <tissue>Gastrula</tissue>
    </source>
</reference>
<reference key="2">
    <citation type="submission" date="2004-06" db="EMBL/GenBank/DDBJ databases">
        <authorList>
            <consortium name="NIH - Xenopus Gene Collection (XGC) project"/>
        </authorList>
    </citation>
    <scope>NUCLEOTIDE SEQUENCE [LARGE SCALE MRNA]</scope>
</reference>
<evidence type="ECO:0000250" key="1"/>
<evidence type="ECO:0000305" key="2"/>
<proteinExistence type="evidence at transcript level"/>
<comment type="function">
    <text evidence="1">Required for the assembly of mature ribosomes and ribosome biogenesis. Together with EFL1, triggers the GTP-dependent release of eif6 from 60S pre-ribosomes in the cytoplasm, thereby activating ribosomes for translation competence by allowing 80S ribosome assembly and facilitating eif6 recycling to the nucleus, where it is required for 60S rRNA processing and nuclear export. Required for normal levels of protein synthesis. May play a role in cellular stress resistance. May play a role in cellular response to DNA damage. May play a role in cell proliferation (By similarity).</text>
</comment>
<comment type="subunit">
    <text evidence="1">Associates with the 60S ribosomal subunit.</text>
</comment>
<comment type="subcellular location">
    <subcellularLocation>
        <location evidence="1">Cytoplasm</location>
    </subcellularLocation>
    <subcellularLocation>
        <location evidence="1">Nucleus</location>
        <location evidence="1">Nucleolus</location>
    </subcellularLocation>
    <subcellularLocation>
        <location evidence="1">Nucleus</location>
        <location evidence="1">Nucleoplasm</location>
    </subcellularLocation>
    <subcellularLocation>
        <location evidence="1">Cytoplasm</location>
        <location evidence="1">Cytoskeleton</location>
        <location evidence="1">Spindle</location>
    </subcellularLocation>
    <text evidence="1">Primarily detected in the cytoplasm, and at low levels in nucleus and nucleolus. Detected at the mitotic spindle. Colocalizes with the microtubule organizing center during interphase (By similarity).</text>
</comment>
<comment type="similarity">
    <text evidence="2">Belongs to the SDO1/SBDS family.</text>
</comment>
<accession>Q6DIT8</accession>
<sequence>MSIFTPTNQIRLTNVAVVRMKKGGKRFEIACYKNKVMSWRSGAEKDLDEVLQTHSVFMNVSKGQVAKKEDLLKSFGTEDPTEICKQILSKGELQVSEKERSTQLEQMFRDIATIVADKCVNPETKRPYTVNLIERAMKDIHYSVKATKSTKQQALDVIKQLKETMQIERAHMRLRFILPAKDGKKLKEKLKPLIKHTESENFDQELEIVCLIDPGCFREIDELIRCETKGKGTLEVLSLKDVEEGDEKFE</sequence>
<dbReference type="EMBL" id="CR855635">
    <property type="protein sequence ID" value="CAJ83828.1"/>
    <property type="molecule type" value="mRNA"/>
</dbReference>
<dbReference type="EMBL" id="BC075447">
    <property type="protein sequence ID" value="AAH75447.1"/>
    <property type="molecule type" value="mRNA"/>
</dbReference>
<dbReference type="RefSeq" id="NP_001004953.1">
    <property type="nucleotide sequence ID" value="NM_001004953.1"/>
</dbReference>
<dbReference type="SMR" id="Q6DIT8"/>
<dbReference type="FunCoup" id="Q6DIT8">
    <property type="interactions" value="3225"/>
</dbReference>
<dbReference type="STRING" id="8364.ENSXETP00000013630"/>
<dbReference type="PaxDb" id="8364-ENSXETP00000059301"/>
<dbReference type="DNASU" id="448365"/>
<dbReference type="GeneID" id="448365"/>
<dbReference type="KEGG" id="xtr:448365"/>
<dbReference type="AGR" id="Xenbase:XB-GENE-1003506"/>
<dbReference type="CTD" id="51119"/>
<dbReference type="Xenbase" id="XB-GENE-1003506">
    <property type="gene designation" value="sbds"/>
</dbReference>
<dbReference type="eggNOG" id="KOG2917">
    <property type="taxonomic scope" value="Eukaryota"/>
</dbReference>
<dbReference type="HOGENOM" id="CLU_043216_1_1_1"/>
<dbReference type="InParanoid" id="Q6DIT8"/>
<dbReference type="OMA" id="AVNPQMD"/>
<dbReference type="OrthoDB" id="10253092at2759"/>
<dbReference type="PhylomeDB" id="Q6DIT8"/>
<dbReference type="Proteomes" id="UP000008143">
    <property type="component" value="Chromosome 2"/>
</dbReference>
<dbReference type="ExpressionAtlas" id="Q6DIT8">
    <property type="expression patterns" value="differential"/>
</dbReference>
<dbReference type="GO" id="GO:0005737">
    <property type="term" value="C:cytoplasm"/>
    <property type="evidence" value="ECO:0007669"/>
    <property type="project" value="UniProtKB-SubCell"/>
</dbReference>
<dbReference type="GO" id="GO:0005730">
    <property type="term" value="C:nucleolus"/>
    <property type="evidence" value="ECO:0007669"/>
    <property type="project" value="UniProtKB-SubCell"/>
</dbReference>
<dbReference type="GO" id="GO:0005654">
    <property type="term" value="C:nucleoplasm"/>
    <property type="evidence" value="ECO:0007669"/>
    <property type="project" value="UniProtKB-SubCell"/>
</dbReference>
<dbReference type="GO" id="GO:0000922">
    <property type="term" value="C:spindle pole"/>
    <property type="evidence" value="ECO:0000250"/>
    <property type="project" value="UniProtKB"/>
</dbReference>
<dbReference type="GO" id="GO:0043022">
    <property type="term" value="F:ribosome binding"/>
    <property type="evidence" value="ECO:0000250"/>
    <property type="project" value="UniProtKB"/>
</dbReference>
<dbReference type="GO" id="GO:0042256">
    <property type="term" value="P:cytosolic ribosome assembly"/>
    <property type="evidence" value="ECO:0000250"/>
    <property type="project" value="UniProtKB"/>
</dbReference>
<dbReference type="GO" id="GO:0002244">
    <property type="term" value="P:hematopoietic progenitor cell differentiation"/>
    <property type="evidence" value="ECO:0000250"/>
    <property type="project" value="UniProtKB"/>
</dbReference>
<dbReference type="FunFam" id="3.30.70.240:FF:000009">
    <property type="entry name" value="SBDS ribosome maturation factor"/>
    <property type="match status" value="1"/>
</dbReference>
<dbReference type="FunFam" id="1.10.10.900:FF:000001">
    <property type="entry name" value="SBDS, ribosome maturation factor"/>
    <property type="match status" value="1"/>
</dbReference>
<dbReference type="FunFam" id="3.30.1250.10:FF:000001">
    <property type="entry name" value="SBDS, ribosome maturation factor"/>
    <property type="match status" value="1"/>
</dbReference>
<dbReference type="Gene3D" id="3.30.70.240">
    <property type="match status" value="1"/>
</dbReference>
<dbReference type="Gene3D" id="3.30.1250.10">
    <property type="entry name" value="Ribosome maturation protein SBDS, N-terminal domain"/>
    <property type="match status" value="1"/>
</dbReference>
<dbReference type="Gene3D" id="1.10.10.900">
    <property type="entry name" value="SBDS protein C-terminal domain, subdomain 1"/>
    <property type="match status" value="1"/>
</dbReference>
<dbReference type="InterPro" id="IPR018023">
    <property type="entry name" value="Ribosome_mat_SBDS_CS"/>
</dbReference>
<dbReference type="InterPro" id="IPR036786">
    <property type="entry name" value="Ribosome_mat_SBDS_N_sf"/>
</dbReference>
<dbReference type="InterPro" id="IPR002140">
    <property type="entry name" value="Sdo1/SBDS"/>
</dbReference>
<dbReference type="InterPro" id="IPR039100">
    <property type="entry name" value="Sdo1/SBDS-like"/>
</dbReference>
<dbReference type="InterPro" id="IPR046928">
    <property type="entry name" value="SDO1/SBDS_C"/>
</dbReference>
<dbReference type="InterPro" id="IPR018978">
    <property type="entry name" value="SDO1/SBDS_central"/>
</dbReference>
<dbReference type="InterPro" id="IPR037188">
    <property type="entry name" value="Sdo1/SBDS_central_sf"/>
</dbReference>
<dbReference type="InterPro" id="IPR019783">
    <property type="entry name" value="SDO1/SBDS_N"/>
</dbReference>
<dbReference type="NCBIfam" id="TIGR00291">
    <property type="entry name" value="RNA_SBDS"/>
    <property type="match status" value="1"/>
</dbReference>
<dbReference type="PANTHER" id="PTHR10927">
    <property type="entry name" value="RIBOSOME MATURATION PROTEIN SBDS"/>
    <property type="match status" value="1"/>
</dbReference>
<dbReference type="PANTHER" id="PTHR10927:SF1">
    <property type="entry name" value="RIBOSOME MATURATION PROTEIN SBDS"/>
    <property type="match status" value="1"/>
</dbReference>
<dbReference type="Pfam" id="PF20268">
    <property type="entry name" value="SBDS_C"/>
    <property type="match status" value="1"/>
</dbReference>
<dbReference type="Pfam" id="PF09377">
    <property type="entry name" value="SBDS_domain_II"/>
    <property type="match status" value="1"/>
</dbReference>
<dbReference type="Pfam" id="PF01172">
    <property type="entry name" value="SBDS_N"/>
    <property type="match status" value="1"/>
</dbReference>
<dbReference type="SUPFAM" id="SSF89895">
    <property type="entry name" value="FYSH domain"/>
    <property type="match status" value="1"/>
</dbReference>
<dbReference type="SUPFAM" id="SSF109728">
    <property type="entry name" value="Hypothetical protein AF0491, middle domain"/>
    <property type="match status" value="1"/>
</dbReference>
<dbReference type="PROSITE" id="PS01267">
    <property type="entry name" value="UPF0023"/>
    <property type="match status" value="1"/>
</dbReference>
<organism>
    <name type="scientific">Xenopus tropicalis</name>
    <name type="common">Western clawed frog</name>
    <name type="synonym">Silurana tropicalis</name>
    <dbReference type="NCBI Taxonomy" id="8364"/>
    <lineage>
        <taxon>Eukaryota</taxon>
        <taxon>Metazoa</taxon>
        <taxon>Chordata</taxon>
        <taxon>Craniata</taxon>
        <taxon>Vertebrata</taxon>
        <taxon>Euteleostomi</taxon>
        <taxon>Amphibia</taxon>
        <taxon>Batrachia</taxon>
        <taxon>Anura</taxon>
        <taxon>Pipoidea</taxon>
        <taxon>Pipidae</taxon>
        <taxon>Xenopodinae</taxon>
        <taxon>Xenopus</taxon>
        <taxon>Silurana</taxon>
    </lineage>
</organism>